<evidence type="ECO:0000256" key="1">
    <source>
        <dbReference type="SAM" id="MobiDB-lite"/>
    </source>
</evidence>
<evidence type="ECO:0000269" key="2">
    <source>
    </source>
</evidence>
<evidence type="ECO:0000269" key="3">
    <source>
    </source>
</evidence>
<evidence type="ECO:0000305" key="4"/>
<organism>
    <name type="scientific">Arabidopsis thaliana</name>
    <name type="common">Mouse-ear cress</name>
    <dbReference type="NCBI Taxonomy" id="3702"/>
    <lineage>
        <taxon>Eukaryota</taxon>
        <taxon>Viridiplantae</taxon>
        <taxon>Streptophyta</taxon>
        <taxon>Embryophyta</taxon>
        <taxon>Tracheophyta</taxon>
        <taxon>Spermatophyta</taxon>
        <taxon>Magnoliopsida</taxon>
        <taxon>eudicotyledons</taxon>
        <taxon>Gunneridae</taxon>
        <taxon>Pentapetalae</taxon>
        <taxon>rosids</taxon>
        <taxon>malvids</taxon>
        <taxon>Brassicales</taxon>
        <taxon>Brassicaceae</taxon>
        <taxon>Camelineae</taxon>
        <taxon>Arabidopsis</taxon>
    </lineage>
</organism>
<keyword id="KW-0217">Developmental protein</keyword>
<keyword id="KW-0341">Growth regulation</keyword>
<keyword id="KW-0539">Nucleus</keyword>
<keyword id="KW-1185">Reference proteome</keyword>
<keyword id="KW-0804">Transcription</keyword>
<keyword id="KW-0805">Transcription regulation</keyword>
<reference key="1">
    <citation type="journal article" date="2012" name="Plant Cell Physiol.">
        <title>CRYPTIC PRECOCIOUS/MED12 is a novel flowering regulator with multiple target steps in Arabidopsis.</title>
        <authorList>
            <person name="Imura Y."/>
            <person name="Kobayashi Y."/>
            <person name="Yamamoto S."/>
            <person name="Furutani M."/>
            <person name="Tasaka M."/>
            <person name="Abe M."/>
            <person name="Araki T."/>
        </authorList>
    </citation>
    <scope>NUCLEOTIDE SEQUENCE [GENOMIC DNA / MRNA]</scope>
    <scope>FUNCTION</scope>
    <scope>MUTAGENESIS OF SER-99</scope>
    <scope>DISRUPTION PHENOTYPE</scope>
    <scope>TISSUE SPECIFICITY</scope>
    <scope>SUBCELLULAR LOCATION</scope>
</reference>
<reference key="2">
    <citation type="journal article" date="1999" name="Nature">
        <title>Sequence and analysis of chromosome 4 of the plant Arabidopsis thaliana.</title>
        <authorList>
            <person name="Mayer K.F.X."/>
            <person name="Schueller C."/>
            <person name="Wambutt R."/>
            <person name="Murphy G."/>
            <person name="Volckaert G."/>
            <person name="Pohl T."/>
            <person name="Duesterhoeft A."/>
            <person name="Stiekema W."/>
            <person name="Entian K.-D."/>
            <person name="Terryn N."/>
            <person name="Harris B."/>
            <person name="Ansorge W."/>
            <person name="Brandt P."/>
            <person name="Grivell L.A."/>
            <person name="Rieger M."/>
            <person name="Weichselgartner M."/>
            <person name="de Simone V."/>
            <person name="Obermaier B."/>
            <person name="Mache R."/>
            <person name="Mueller M."/>
            <person name="Kreis M."/>
            <person name="Delseny M."/>
            <person name="Puigdomenech P."/>
            <person name="Watson M."/>
            <person name="Schmidtheini T."/>
            <person name="Reichert B."/>
            <person name="Portetelle D."/>
            <person name="Perez-Alonso M."/>
            <person name="Boutry M."/>
            <person name="Bancroft I."/>
            <person name="Vos P."/>
            <person name="Hoheisel J."/>
            <person name="Zimmermann W."/>
            <person name="Wedler H."/>
            <person name="Ridley P."/>
            <person name="Langham S.-A."/>
            <person name="McCullagh B."/>
            <person name="Bilham L."/>
            <person name="Robben J."/>
            <person name="van der Schueren J."/>
            <person name="Grymonprez B."/>
            <person name="Chuang Y.-J."/>
            <person name="Vandenbussche F."/>
            <person name="Braeken M."/>
            <person name="Weltjens I."/>
            <person name="Voet M."/>
            <person name="Bastiaens I."/>
            <person name="Aert R."/>
            <person name="Defoor E."/>
            <person name="Weitzenegger T."/>
            <person name="Bothe G."/>
            <person name="Ramsperger U."/>
            <person name="Hilbert H."/>
            <person name="Braun M."/>
            <person name="Holzer E."/>
            <person name="Brandt A."/>
            <person name="Peters S."/>
            <person name="van Staveren M."/>
            <person name="Dirkse W."/>
            <person name="Mooijman P."/>
            <person name="Klein Lankhorst R."/>
            <person name="Rose M."/>
            <person name="Hauf J."/>
            <person name="Koetter P."/>
            <person name="Berneiser S."/>
            <person name="Hempel S."/>
            <person name="Feldpausch M."/>
            <person name="Lamberth S."/>
            <person name="Van den Daele H."/>
            <person name="De Keyser A."/>
            <person name="Buysshaert C."/>
            <person name="Gielen J."/>
            <person name="Villarroel R."/>
            <person name="De Clercq R."/>
            <person name="van Montagu M."/>
            <person name="Rogers J."/>
            <person name="Cronin A."/>
            <person name="Quail M.A."/>
            <person name="Bray-Allen S."/>
            <person name="Clark L."/>
            <person name="Doggett J."/>
            <person name="Hall S."/>
            <person name="Kay M."/>
            <person name="Lennard N."/>
            <person name="McLay K."/>
            <person name="Mayes R."/>
            <person name="Pettett A."/>
            <person name="Rajandream M.A."/>
            <person name="Lyne M."/>
            <person name="Benes V."/>
            <person name="Rechmann S."/>
            <person name="Borkova D."/>
            <person name="Bloecker H."/>
            <person name="Scharfe M."/>
            <person name="Grimm M."/>
            <person name="Loehnert T.-H."/>
            <person name="Dose S."/>
            <person name="de Haan M."/>
            <person name="Maarse A.C."/>
            <person name="Schaefer M."/>
            <person name="Mueller-Auer S."/>
            <person name="Gabel C."/>
            <person name="Fuchs M."/>
            <person name="Fartmann B."/>
            <person name="Granderath K."/>
            <person name="Dauner D."/>
            <person name="Herzl A."/>
            <person name="Neumann S."/>
            <person name="Argiriou A."/>
            <person name="Vitale D."/>
            <person name="Liguori R."/>
            <person name="Piravandi E."/>
            <person name="Massenet O."/>
            <person name="Quigley F."/>
            <person name="Clabauld G."/>
            <person name="Muendlein A."/>
            <person name="Felber R."/>
            <person name="Schnabl S."/>
            <person name="Hiller R."/>
            <person name="Schmidt W."/>
            <person name="Lecharny A."/>
            <person name="Aubourg S."/>
            <person name="Chefdor F."/>
            <person name="Cooke R."/>
            <person name="Berger C."/>
            <person name="Monfort A."/>
            <person name="Casacuberta E."/>
            <person name="Gibbons T."/>
            <person name="Weber N."/>
            <person name="Vandenbol M."/>
            <person name="Bargues M."/>
            <person name="Terol J."/>
            <person name="Torres A."/>
            <person name="Perez-Perez A."/>
            <person name="Purnelle B."/>
            <person name="Bent E."/>
            <person name="Johnson S."/>
            <person name="Tacon D."/>
            <person name="Jesse T."/>
            <person name="Heijnen L."/>
            <person name="Schwarz S."/>
            <person name="Scholler P."/>
            <person name="Heber S."/>
            <person name="Francs P."/>
            <person name="Bielke C."/>
            <person name="Frishman D."/>
            <person name="Haase D."/>
            <person name="Lemcke K."/>
            <person name="Mewes H.-W."/>
            <person name="Stocker S."/>
            <person name="Zaccaria P."/>
            <person name="Bevan M."/>
            <person name="Wilson R.K."/>
            <person name="de la Bastide M."/>
            <person name="Habermann K."/>
            <person name="Parnell L."/>
            <person name="Dedhia N."/>
            <person name="Gnoj L."/>
            <person name="Schutz K."/>
            <person name="Huang E."/>
            <person name="Spiegel L."/>
            <person name="Sekhon M."/>
            <person name="Murray J."/>
            <person name="Sheet P."/>
            <person name="Cordes M."/>
            <person name="Abu-Threideh J."/>
            <person name="Stoneking T."/>
            <person name="Kalicki J."/>
            <person name="Graves T."/>
            <person name="Harmon G."/>
            <person name="Edwards J."/>
            <person name="Latreille P."/>
            <person name="Courtney L."/>
            <person name="Cloud J."/>
            <person name="Abbott A."/>
            <person name="Scott K."/>
            <person name="Johnson D."/>
            <person name="Minx P."/>
            <person name="Bentley D."/>
            <person name="Fulton B."/>
            <person name="Miller N."/>
            <person name="Greco T."/>
            <person name="Kemp K."/>
            <person name="Kramer J."/>
            <person name="Fulton L."/>
            <person name="Mardis E."/>
            <person name="Dante M."/>
            <person name="Pepin K."/>
            <person name="Hillier L.W."/>
            <person name="Nelson J."/>
            <person name="Spieth J."/>
            <person name="Ryan E."/>
            <person name="Andrews S."/>
            <person name="Geisel C."/>
            <person name="Layman D."/>
            <person name="Du H."/>
            <person name="Ali J."/>
            <person name="Berghoff A."/>
            <person name="Jones K."/>
            <person name="Drone K."/>
            <person name="Cotton M."/>
            <person name="Joshu C."/>
            <person name="Antonoiu B."/>
            <person name="Zidanic M."/>
            <person name="Strong C."/>
            <person name="Sun H."/>
            <person name="Lamar B."/>
            <person name="Yordan C."/>
            <person name="Ma P."/>
            <person name="Zhong J."/>
            <person name="Preston R."/>
            <person name="Vil D."/>
            <person name="Shekher M."/>
            <person name="Matero A."/>
            <person name="Shah R."/>
            <person name="Swaby I.K."/>
            <person name="O'Shaughnessy A."/>
            <person name="Rodriguez M."/>
            <person name="Hoffman J."/>
            <person name="Till S."/>
            <person name="Granat S."/>
            <person name="Shohdy N."/>
            <person name="Hasegawa A."/>
            <person name="Hameed A."/>
            <person name="Lodhi M."/>
            <person name="Johnson A."/>
            <person name="Chen E."/>
            <person name="Marra M.A."/>
            <person name="Martienssen R."/>
            <person name="McCombie W.R."/>
        </authorList>
    </citation>
    <scope>NUCLEOTIDE SEQUENCE [LARGE SCALE GENOMIC DNA]</scope>
    <source>
        <strain>cv. Columbia</strain>
    </source>
</reference>
<reference key="3">
    <citation type="journal article" date="2017" name="Plant J.">
        <title>Araport11: a complete reannotation of the Arabidopsis thaliana reference genome.</title>
        <authorList>
            <person name="Cheng C.Y."/>
            <person name="Krishnakumar V."/>
            <person name="Chan A.P."/>
            <person name="Thibaud-Nissen F."/>
            <person name="Schobel S."/>
            <person name="Town C.D."/>
        </authorList>
    </citation>
    <scope>GENOME REANNOTATION</scope>
    <source>
        <strain>cv. Columbia</strain>
    </source>
</reference>
<reference key="4">
    <citation type="journal article" date="2010" name="Development">
        <title>The MED12-MED13 module of Mediator regulates the timing of embryo patterning in Arabidopsis.</title>
        <authorList>
            <person name="Gillmor C.S."/>
            <person name="Park M.Y."/>
            <person name="Smith M.R."/>
            <person name="Pepitone R."/>
            <person name="Kerstetter R.A."/>
            <person name="Poethig R.S."/>
        </authorList>
    </citation>
    <scope>FUNCTION</scope>
    <scope>DEVELOPMENTAL STAGE</scope>
    <scope>DISRUPTION PHENOTYPE</scope>
    <source>
        <strain>cv. Columbia</strain>
    </source>
</reference>
<reference key="5">
    <citation type="journal article" date="2011" name="Plant Physiol.">
        <title>The Mediator complex in plants: structure, phylogeny, and expression profiling of representative genes in a dicot (Arabidopsis) and a monocot (rice) during reproduction and abiotic stress.</title>
        <authorList>
            <person name="Mathur S."/>
            <person name="Vyas S."/>
            <person name="Kapoor S."/>
            <person name="Tyagi A.K."/>
        </authorList>
    </citation>
    <scope>IDENTIFICATION</scope>
    <scope>NOMENCLATURE</scope>
</reference>
<feature type="chain" id="PRO_0000418347" description="Mediator of RNA polymerase II transcription subunit 12">
    <location>
        <begin position="1"/>
        <end position="2235"/>
    </location>
</feature>
<feature type="region of interest" description="Disordered" evidence="1">
    <location>
        <begin position="16"/>
        <end position="80"/>
    </location>
</feature>
<feature type="region of interest" description="Disordered" evidence="1">
    <location>
        <begin position="268"/>
        <end position="293"/>
    </location>
</feature>
<feature type="region of interest" description="Disordered" evidence="1">
    <location>
        <begin position="835"/>
        <end position="858"/>
    </location>
</feature>
<feature type="region of interest" description="Disordered" evidence="1">
    <location>
        <begin position="1900"/>
        <end position="1959"/>
    </location>
</feature>
<feature type="region of interest" description="Disordered" evidence="1">
    <location>
        <begin position="2134"/>
        <end position="2160"/>
    </location>
</feature>
<feature type="region of interest" description="Disordered" evidence="1">
    <location>
        <begin position="2183"/>
        <end position="2202"/>
    </location>
</feature>
<feature type="compositionally biased region" description="Low complexity" evidence="1">
    <location>
        <begin position="16"/>
        <end position="35"/>
    </location>
</feature>
<feature type="compositionally biased region" description="Polar residues" evidence="1">
    <location>
        <begin position="280"/>
        <end position="293"/>
    </location>
</feature>
<feature type="compositionally biased region" description="Polar residues" evidence="1">
    <location>
        <begin position="1900"/>
        <end position="1916"/>
    </location>
</feature>
<feature type="compositionally biased region" description="Low complexity" evidence="1">
    <location>
        <begin position="1917"/>
        <end position="1927"/>
    </location>
</feature>
<feature type="compositionally biased region" description="Polar residues" evidence="1">
    <location>
        <begin position="2134"/>
        <end position="2155"/>
    </location>
</feature>
<feature type="compositionally biased region" description="Low complexity" evidence="1">
    <location>
        <begin position="2191"/>
        <end position="2202"/>
    </location>
</feature>
<feature type="mutagenesis site" description="Precocious flowering." evidence="3">
    <original>S</original>
    <variation>F</variation>
    <location>
        <position position="99"/>
    </location>
</feature>
<gene>
    <name type="primary">MED12</name>
    <name type="synonym">CCT</name>
    <name type="synonym">CRP</name>
    <name type="synonym">MED12_1</name>
    <name type="ordered locus">At4g00450</name>
    <name type="ORF">F5I10.24</name>
</gene>
<accession>H3K2Y6</accession>
<accession>F4JHC0</accession>
<accession>O23057</accession>
<comment type="function">
    <text evidence="2 3">Component of the Mediator complex, a coactivator involved in the regulated transcription of nearly all RNA polymerase II-dependent genes. Mediator functions as a bridge to convey information from gene-specific regulatory proteins to the basal RNA polymerase II transcription machinery. The Mediator complex, having a compact conformation in its free form, is recruited to promoters by direct interactions with regulatory proteins and serves for the assembly of a functional preinitiation complex with RNA polymerase II and the general transcription factors. Flowering regulator which suppresses FLC expression, promotes FT and TSF expression and up-regulates SOC1 and FUL mainly in an FT-dependent manner under long-day conditions. Involved in diverse developmental aspects through gene regulation and modulation of the auxin response. Acts closely together with MAB13. Involved in the regulation of embryo patterning and cotyledon organogenesis by transiently repressing a transcriptional program that interferes with this process.</text>
</comment>
<comment type="subunit">
    <text>Component of the Mediator complex.</text>
</comment>
<comment type="subcellular location">
    <subcellularLocation>
        <location evidence="3">Nucleus</location>
    </subcellularLocation>
</comment>
<comment type="tissue specificity">
    <text evidence="3">Ubiquitous. Higher expression in vascular tissue, shoot apex and developing floral organs.</text>
</comment>
<comment type="developmental stage">
    <text evidence="2">Expressed first at the dermatogen stage of embryogenesis and then in all cells of the embryo and suspensor through the globular stage. Decreases in the periphery of the hypocotyl and on the abaxial side of cotyledons from the heart stage to the torpedo stage, and by the bent cotyledon stage, restricted to the vascular tissue and the shoot and root apical meristems.</text>
</comment>
<comment type="disruption phenotype">
    <text evidence="2 3">Abnormal embryo and cotyledon development, and embryo lethality in some cases. When viable, plants are small, with abnormal leaf shape and vascular patterning, ectopic bract-like organs and greatly delayed flowering time and sterile flowers.</text>
</comment>
<comment type="similarity">
    <text evidence="4">Belongs to the Mediator complex subunit 12 family.</text>
</comment>
<comment type="sequence caution" evidence="4">
    <conflict type="erroneous gene model prediction">
        <sequence resource="EMBL-CDS" id="AAB62842"/>
    </conflict>
</comment>
<comment type="sequence caution" evidence="4">
    <conflict type="erroneous gene model prediction">
        <sequence resource="EMBL-CDS" id="AAF02800"/>
    </conflict>
</comment>
<comment type="sequence caution" evidence="4">
    <conflict type="erroneous gene model prediction">
        <sequence resource="EMBL-CDS" id="CAB80854"/>
    </conflict>
</comment>
<proteinExistence type="evidence at protein level"/>
<name>MED12_ARATH</name>
<dbReference type="EMBL" id="AB690341">
    <property type="protein sequence ID" value="BAL49816.1"/>
    <property type="molecule type" value="mRNA"/>
</dbReference>
<dbReference type="EMBL" id="AB690342">
    <property type="protein sequence ID" value="BAL49817.1"/>
    <property type="molecule type" value="mRNA"/>
</dbReference>
<dbReference type="EMBL" id="AB690343">
    <property type="protein sequence ID" value="BAL49818.1"/>
    <property type="molecule type" value="Genomic_DNA"/>
</dbReference>
<dbReference type="EMBL" id="AF013293">
    <property type="protein sequence ID" value="AAB62842.1"/>
    <property type="status" value="ALT_SEQ"/>
    <property type="molecule type" value="Genomic_DNA"/>
</dbReference>
<dbReference type="EMBL" id="AF195115">
    <property type="protein sequence ID" value="AAF02800.1"/>
    <property type="status" value="ALT_SEQ"/>
    <property type="molecule type" value="Genomic_DNA"/>
</dbReference>
<dbReference type="EMBL" id="AL161472">
    <property type="protein sequence ID" value="CAB80854.1"/>
    <property type="status" value="ALT_SEQ"/>
    <property type="molecule type" value="Genomic_DNA"/>
</dbReference>
<dbReference type="EMBL" id="CP002687">
    <property type="protein sequence ID" value="AEE81883.2"/>
    <property type="molecule type" value="Genomic_DNA"/>
</dbReference>
<dbReference type="EMBL" id="CP002687">
    <property type="protein sequence ID" value="ANM67285.1"/>
    <property type="molecule type" value="Genomic_DNA"/>
</dbReference>
<dbReference type="EMBL" id="CP002687">
    <property type="protein sequence ID" value="ANM67286.1"/>
    <property type="molecule type" value="Genomic_DNA"/>
</dbReference>
<dbReference type="PIR" id="T01526">
    <property type="entry name" value="T01526"/>
</dbReference>
<dbReference type="RefSeq" id="NP_001319832.1">
    <property type="nucleotide sequence ID" value="NM_001340249.1"/>
</dbReference>
<dbReference type="RefSeq" id="NP_001329123.1">
    <property type="nucleotide sequence ID" value="NM_001340250.1"/>
</dbReference>
<dbReference type="RefSeq" id="NP_001329124.1">
    <property type="nucleotide sequence ID" value="NM_001340251.1"/>
</dbReference>
<dbReference type="FunCoup" id="H3K2Y6">
    <property type="interactions" value="1981"/>
</dbReference>
<dbReference type="STRING" id="3702.H3K2Y6"/>
<dbReference type="GlyGen" id="H3K2Y6">
    <property type="glycosylation" value="1 site"/>
</dbReference>
<dbReference type="iPTMnet" id="H3K2Y6"/>
<dbReference type="PaxDb" id="3702-AT4G00450.1"/>
<dbReference type="ProteomicsDB" id="238773"/>
<dbReference type="EnsemblPlants" id="AT4G00450.1">
    <property type="protein sequence ID" value="AT4G00450.1"/>
    <property type="gene ID" value="AT4G00450"/>
</dbReference>
<dbReference type="EnsemblPlants" id="AT4G00450.2">
    <property type="protein sequence ID" value="AT4G00450.2"/>
    <property type="gene ID" value="AT4G00450"/>
</dbReference>
<dbReference type="EnsemblPlants" id="AT4G00450.3">
    <property type="protein sequence ID" value="AT4G00450.3"/>
    <property type="gene ID" value="AT4G00450"/>
</dbReference>
<dbReference type="GeneID" id="827954"/>
<dbReference type="Gramene" id="AT4G00450.1">
    <property type="protein sequence ID" value="AT4G00450.1"/>
    <property type="gene ID" value="AT4G00450"/>
</dbReference>
<dbReference type="Gramene" id="AT4G00450.2">
    <property type="protein sequence ID" value="AT4G00450.2"/>
    <property type="gene ID" value="AT4G00450"/>
</dbReference>
<dbReference type="Gramene" id="AT4G00450.3">
    <property type="protein sequence ID" value="AT4G00450.3"/>
    <property type="gene ID" value="AT4G00450"/>
</dbReference>
<dbReference type="KEGG" id="ath:AT4G00450"/>
<dbReference type="Araport" id="AT4G00450"/>
<dbReference type="TAIR" id="AT4G00450">
    <property type="gene designation" value="CCT"/>
</dbReference>
<dbReference type="eggNOG" id="KOG4522">
    <property type="taxonomic scope" value="Eukaryota"/>
</dbReference>
<dbReference type="InParanoid" id="H3K2Y6"/>
<dbReference type="OMA" id="DCEDCAR"/>
<dbReference type="PRO" id="PR:H3K2Y6"/>
<dbReference type="Proteomes" id="UP000006548">
    <property type="component" value="Chromosome 4"/>
</dbReference>
<dbReference type="ExpressionAtlas" id="H3K2Y6">
    <property type="expression patterns" value="baseline and differential"/>
</dbReference>
<dbReference type="GO" id="GO:0016592">
    <property type="term" value="C:mediator complex"/>
    <property type="evidence" value="ECO:0007669"/>
    <property type="project" value="InterPro"/>
</dbReference>
<dbReference type="GO" id="GO:0005634">
    <property type="term" value="C:nucleus"/>
    <property type="evidence" value="ECO:0000314"/>
    <property type="project" value="TAIR"/>
</dbReference>
<dbReference type="GO" id="GO:0003712">
    <property type="term" value="F:transcription coregulator activity"/>
    <property type="evidence" value="ECO:0007669"/>
    <property type="project" value="InterPro"/>
</dbReference>
<dbReference type="GO" id="GO:0040034">
    <property type="term" value="P:regulation of development, heterochronic"/>
    <property type="evidence" value="ECO:0000315"/>
    <property type="project" value="TAIR"/>
</dbReference>
<dbReference type="GO" id="GO:0090213">
    <property type="term" value="P:regulation of radial pattern formation"/>
    <property type="evidence" value="ECO:0000315"/>
    <property type="project" value="TAIR"/>
</dbReference>
<dbReference type="GO" id="GO:0006357">
    <property type="term" value="P:regulation of transcription by RNA polymerase II"/>
    <property type="evidence" value="ECO:0007669"/>
    <property type="project" value="InterPro"/>
</dbReference>
<dbReference type="InterPro" id="IPR019035">
    <property type="entry name" value="Mediator_Med12"/>
</dbReference>
<dbReference type="PANTHER" id="PTHR46567">
    <property type="entry name" value="MEDIATOR OF RNA POLYMERASE II TRANSCRIPTION SUBUNIT 12"/>
    <property type="match status" value="1"/>
</dbReference>
<dbReference type="PANTHER" id="PTHR46567:SF1">
    <property type="entry name" value="MEDIATOR OF RNA POLYMERASE II TRANSCRIPTION SUBUNIT 12"/>
    <property type="match status" value="1"/>
</dbReference>
<dbReference type="Pfam" id="PF09497">
    <property type="entry name" value="Med12"/>
    <property type="match status" value="1"/>
</dbReference>
<dbReference type="SMART" id="SM01281">
    <property type="entry name" value="Med12"/>
    <property type="match status" value="1"/>
</dbReference>
<protein>
    <recommendedName>
        <fullName>Mediator of RNA polymerase II transcription subunit 12</fullName>
    </recommendedName>
    <alternativeName>
        <fullName>Protein CENTER CITY</fullName>
    </alternativeName>
    <alternativeName>
        <fullName>Protein CRYPTIC PRECOCIOUS</fullName>
    </alternativeName>
</protein>
<sequence length="2235" mass="247227">MQRYHAANCTSAVNNSAIGGASARDSGRADSSSIGNYSLNSRRPPPLTPYKLKCEKDGLNSRLGPPDFHPPTSNSPEENLTKEYVQFGYKETVDGLKESEEIILSQVHTFSKPVVHKCKEAVRKCLRAINESRALKRKAGQVYGVPLSGSLLCKPGFPEQRSCGEETKKRWIESLSQQHKRLRSLADNIPGYRRKTLFEVLIRNNVPLLRATWFIKVTYLNQVRPSPAAISSGTPDKTQASRCEQWTKDVIEYLQYLLDELLSRNSSFPAQQTRDRSPQMLYTGSMQKNSPASTSLYGEETSLHFKWWYMVRLLQWHHAEGLLFPNLIVDWVLKLLQEKEIFEILQLLLPIVYGVLESIVLSQTYVQSLVAIAVRFIQEPAPGGSDLVDNSRRAYTLSALIEMVRYLVLAAPDTFVASDFFPLPPSVAACGPNDVSYTSKAYENLEKLRSNSAEISAQFQGRGVLSRFEFLSFDYTISTIQRSADDLAKIASAGYPQHNVAKAVQALDKALSDGDIRAAYSYLFEDLCNGAVDEAWITDVSPCLRSSLRWIGAISTSFVCSVFFLIEWATCDFRDFRAGVPKDIKFSGRKDCSQVYLVIQLLKQKILGGEFTARKGKNCRNNFLGVSKPSGSMDAFESPGPLHDIIVCWIDQHEVHKGGAKRLQLLVFELIRSGIFNPIAYVRQLIVSGMIDVIQPAVDPERRMRHHRILKQLPGCFVHETLEEAQLFGGDKLSEAVRTYSNERRLLLRELLVEKGKYWNNLVLSDQKSKKISTSLSSVIFPRACNAKSNSKGPRKHTKSSVDIRELKERISALLQFPGMSCGVETPVRDEFQNSVKRSSGSVYSKMDQPEATPGCEDCRRAKRPKMNDEKSSCYQGNSPIASDEEDNWWIKKGSKTVESSLKVDPQIEITKQVPRGRQKMARKTQSLAQLQAARIEGSQGASTSHVCDNKVSCPHHGPGVEGENQKVVDVFRTSTPVDMVSVGNSLKQLQFVDKRSIAVWLTTAVRQLVEEPQKSSVRVGQFNRGAPVEEKNTIRWKLGADELYSILFLLDISLDLVSAVKFLLWLLPKANSTPSFAVQGGRNLVTVPRNVENNMCEIGEAILVSSLRRYENILLSADLVPEAMTALMNRAASLMSSNGKISGSAALVYTRYILKRYGSLPSVVEWHNNFKATSEKKLLSELDHTRSGNGEYGNPLGVPAGVDNPDDYLRKKISIGGARPSRVGLSMRDVLQRHVEEATHYLKKLIGTGTMKASLAEKNDDGYQVAQQIVVGLMDCIRQTGGAAQEGDPSLVSSAVSAIINSVGLSVARITDFSLGNIYQNHPSGVDSSNIARYILRIHITCLCLLKEALGERQSRVFEIALATESSTALTGVFAPVKGSRGQHQLSPESYDSNANNSTIDMSNGTGKMALSRATKITAAVSALVIGSITHGVITLERIVGLLRLKDYLDFVQFVRRTKSSSNGSARSMGASKVESPIEVYVHWFRLLVGNCKTVSEGLVLELVGESSVVAISRMQRMLPLKLVFPPAYSIIAFVLWRPFVSNSNSNSSVHEDTHRLYQSLTMAFHDVIKHLPFRDVCFRDTQGLYELIVADSTDAEFASVFESHGLDMHLKSVAFAPLRARLFLNSLIDCKVPSSGYSHEGVSEAKNRHQGNGTKLVDKLVSVLDCLQPAKFHWQWVELRLLLNEQALAEKLENHDMPLTDAIRSSCPTSEKPDASENEKNFIQILLTRLLVRPDAVPLFSEVVHLFGRSVEDSMLKQAEWFLAGQDVLFGRKTIRQKLIIVGESKGLPTKPQFWKPWGWCNSSSSDHITANKAGKKRKFEITSIEEGEVIEEGSGSRKVLLPRVLDENSPSVGYGITTERAFVQLVLPCIDQSSDESRSTFVNELVRQFSNIEQQLSSVTNRSTTSNKQMGTASSGSEISSNKGSTRKGLRGGSPSLARRSSANTTDTSPPPSPAALRASMSLRLQFLLRLLPVICGEPSFKNTRHALASTIVRLLGSRVVYEDYAVCSPRSELSKAETESTIDPSSMADLSSEVLFDRLLFVLHGLLSNHQPKWLKPRPSSNESSKDFTLFDRDAAESLQNELSRMQLPDTIRWRIQAAMPILLPSLRCSLSCQPHSVPPTALTLVQPSGSTAAAGTNQRNSPAISKSGTAAAQGKLKPTMLAPHQQQEADNTDVVDPWTLLEDGTSSGLSSSNASNSSDMANLRATCWLKGAVRVRRTDLTYVGSVDDDS</sequence>